<proteinExistence type="evidence at protein level"/>
<dbReference type="EMBL" id="M86671">
    <property type="protein sequence ID" value="AAA39296.1"/>
    <property type="molecule type" value="mRNA"/>
</dbReference>
<dbReference type="EMBL" id="S82426">
    <property type="protein sequence ID" value="AAB37383.1"/>
    <property type="molecule type" value="Genomic_DNA"/>
</dbReference>
<dbReference type="EMBL" id="S82421">
    <property type="protein sequence ID" value="AAB37383.1"/>
    <property type="status" value="JOINED"/>
    <property type="molecule type" value="Genomic_DNA"/>
</dbReference>
<dbReference type="EMBL" id="S82422">
    <property type="protein sequence ID" value="AAB37383.1"/>
    <property type="status" value="JOINED"/>
    <property type="molecule type" value="Genomic_DNA"/>
</dbReference>
<dbReference type="EMBL" id="S82424">
    <property type="protein sequence ID" value="AAB37383.1"/>
    <property type="status" value="JOINED"/>
    <property type="molecule type" value="Genomic_DNA"/>
</dbReference>
<dbReference type="EMBL" id="S82425">
    <property type="protein sequence ID" value="AAB37383.1"/>
    <property type="status" value="JOINED"/>
    <property type="molecule type" value="Genomic_DNA"/>
</dbReference>
<dbReference type="EMBL" id="AF128214">
    <property type="protein sequence ID" value="AAF22555.1"/>
    <property type="molecule type" value="mRNA"/>
</dbReference>
<dbReference type="EMBL" id="AF128215">
    <property type="protein sequence ID" value="AAF22556.1"/>
    <property type="molecule type" value="mRNA"/>
</dbReference>
<dbReference type="CCDS" id="CCDS24563.1"/>
<dbReference type="PIR" id="I72789">
    <property type="entry name" value="I72789"/>
</dbReference>
<dbReference type="RefSeq" id="NP_001290173.1">
    <property type="nucleotide sequence ID" value="NM_001303244.1"/>
</dbReference>
<dbReference type="PDB" id="6SFF">
    <property type="method" value="X-ray"/>
    <property type="resolution" value="2.40 A"/>
    <property type="chains" value="A=1-335"/>
</dbReference>
<dbReference type="PDB" id="6SMC">
    <property type="method" value="X-ray"/>
    <property type="resolution" value="3.50 A"/>
    <property type="chains" value="A/B/C/D=1-335"/>
</dbReference>
<dbReference type="PDB" id="6SP3">
    <property type="method" value="X-ray"/>
    <property type="resolution" value="3.00 A"/>
    <property type="chains" value="A/B=1-335"/>
</dbReference>
<dbReference type="PDB" id="7PUR">
    <property type="method" value="X-ray"/>
    <property type="resolution" value="3.90 A"/>
    <property type="chains" value="A/B=1-335"/>
</dbReference>
<dbReference type="PDB" id="7R3N">
    <property type="method" value="X-ray"/>
    <property type="resolution" value="3.16 A"/>
    <property type="chains" value="A/B/C/D=1-335"/>
</dbReference>
<dbReference type="PDB" id="8CR5">
    <property type="method" value="X-ray"/>
    <property type="resolution" value="2.15 A"/>
    <property type="chains" value="A=1-335"/>
</dbReference>
<dbReference type="PDB" id="8CR6">
    <property type="method" value="X-ray"/>
    <property type="resolution" value="2.85 A"/>
    <property type="chains" value="A=1-335"/>
</dbReference>
<dbReference type="PDB" id="8ODZ">
    <property type="method" value="EM"/>
    <property type="resolution" value="3.60 A"/>
    <property type="chains" value="B=23-335"/>
</dbReference>
<dbReference type="PDB" id="8OE0">
    <property type="method" value="EM"/>
    <property type="resolution" value="4.60 A"/>
    <property type="chains" value="B=23-335"/>
</dbReference>
<dbReference type="PDB" id="8PB1">
    <property type="method" value="EM"/>
    <property type="resolution" value="3.50 A"/>
    <property type="chains" value="B=23-335"/>
</dbReference>
<dbReference type="PDBsum" id="6SFF"/>
<dbReference type="PDBsum" id="6SMC"/>
<dbReference type="PDBsum" id="6SP3"/>
<dbReference type="PDBsum" id="7PUR"/>
<dbReference type="PDBsum" id="7R3N"/>
<dbReference type="PDBsum" id="8CR5"/>
<dbReference type="PDBsum" id="8CR6"/>
<dbReference type="PDBsum" id="8ODZ"/>
<dbReference type="PDBsum" id="8OE0"/>
<dbReference type="PDBsum" id="8PB1"/>
<dbReference type="EMDB" id="EMD-16820"/>
<dbReference type="EMDB" id="EMD-16821"/>
<dbReference type="EMDB" id="EMD-16822"/>
<dbReference type="EMDB" id="EMD-16823"/>
<dbReference type="EMDB" id="EMD-17580"/>
<dbReference type="SMR" id="P43432"/>
<dbReference type="ComplexPortal" id="CPX-3293">
    <property type="entry name" value="Interleukin-23 complex"/>
</dbReference>
<dbReference type="ComplexPortal" id="CPX-387">
    <property type="entry name" value="Interleukin-12 complex"/>
</dbReference>
<dbReference type="ComplexPortal" id="CPX-388">
    <property type="entry name" value="Interleukin-12-receptor complex"/>
</dbReference>
<dbReference type="ComplexPortal" id="CPX-389">
    <property type="entry name" value="Interleukin-23-receptor complex"/>
</dbReference>
<dbReference type="DIP" id="DIP-6013N"/>
<dbReference type="FunCoup" id="P43432">
    <property type="interactions" value="431"/>
</dbReference>
<dbReference type="IntAct" id="P43432">
    <property type="interactions" value="1"/>
</dbReference>
<dbReference type="STRING" id="10090.ENSMUSP00000125867"/>
<dbReference type="ChEMBL" id="CHEMBL2176814"/>
<dbReference type="GlyCosmos" id="P43432">
    <property type="glycosylation" value="4 sites, No reported glycans"/>
</dbReference>
<dbReference type="GlyGen" id="P43432">
    <property type="glycosylation" value="6 sites, 1 O-linked glycan (1 site)"/>
</dbReference>
<dbReference type="iPTMnet" id="P43432"/>
<dbReference type="PhosphoSitePlus" id="P43432"/>
<dbReference type="PaxDb" id="10090-ENSMUSP00000125867"/>
<dbReference type="ProteomicsDB" id="266966"/>
<dbReference type="Antibodypedia" id="16629">
    <property type="antibodies" value="1064 antibodies from 49 providers"/>
</dbReference>
<dbReference type="DNASU" id="16160"/>
<dbReference type="Ensembl" id="ENSMUST00000102796.10">
    <property type="protein sequence ID" value="ENSMUSP00000099860.4"/>
    <property type="gene ID" value="ENSMUSG00000004296.15"/>
</dbReference>
<dbReference type="Ensembl" id="ENSMUST00000170513.3">
    <property type="protein sequence ID" value="ENSMUSP00000125867.2"/>
    <property type="gene ID" value="ENSMUSG00000004296.15"/>
</dbReference>
<dbReference type="GeneID" id="16160"/>
<dbReference type="KEGG" id="mmu:16160"/>
<dbReference type="UCSC" id="uc007inc.2">
    <property type="organism name" value="mouse"/>
</dbReference>
<dbReference type="AGR" id="MGI:96540"/>
<dbReference type="CTD" id="3593"/>
<dbReference type="MGI" id="MGI:96540">
    <property type="gene designation" value="Il12b"/>
</dbReference>
<dbReference type="VEuPathDB" id="HostDB:ENSMUSG00000004296"/>
<dbReference type="eggNOG" id="ENOG502S0BC">
    <property type="taxonomic scope" value="Eukaryota"/>
</dbReference>
<dbReference type="GeneTree" id="ENSGT00390000012630"/>
<dbReference type="HOGENOM" id="CLU_071206_1_0_1"/>
<dbReference type="InParanoid" id="P43432"/>
<dbReference type="OMA" id="IMAIWEL"/>
<dbReference type="OrthoDB" id="8670716at2759"/>
<dbReference type="PhylomeDB" id="P43432"/>
<dbReference type="TreeFam" id="TF334829"/>
<dbReference type="Reactome" id="R-MMU-9020591">
    <property type="pathway name" value="Interleukin-12 signaling"/>
</dbReference>
<dbReference type="Reactome" id="R-MMU-9020933">
    <property type="pathway name" value="Interleukin-23 signaling"/>
</dbReference>
<dbReference type="BioGRID-ORCS" id="16160">
    <property type="hits" value="0 hits in 62 CRISPR screens"/>
</dbReference>
<dbReference type="PRO" id="PR:P43432"/>
<dbReference type="Proteomes" id="UP000000589">
    <property type="component" value="Chromosome 11"/>
</dbReference>
<dbReference type="RNAct" id="P43432">
    <property type="molecule type" value="protein"/>
</dbReference>
<dbReference type="Bgee" id="ENSMUSG00000004296">
    <property type="expression patterns" value="Expressed in mesodermal cell in embryo and 12 other cell types or tissues"/>
</dbReference>
<dbReference type="ExpressionAtlas" id="P43432">
    <property type="expression patterns" value="baseline and differential"/>
</dbReference>
<dbReference type="GO" id="GO:0009986">
    <property type="term" value="C:cell surface"/>
    <property type="evidence" value="ECO:0000314"/>
    <property type="project" value="MGI"/>
</dbReference>
<dbReference type="GO" id="GO:0005737">
    <property type="term" value="C:cytoplasm"/>
    <property type="evidence" value="ECO:0000314"/>
    <property type="project" value="MGI"/>
</dbReference>
<dbReference type="GO" id="GO:0005788">
    <property type="term" value="C:endoplasmic reticulum lumen"/>
    <property type="evidence" value="ECO:0000304"/>
    <property type="project" value="Reactome"/>
</dbReference>
<dbReference type="GO" id="GO:0031904">
    <property type="term" value="C:endosome lumen"/>
    <property type="evidence" value="ECO:0000304"/>
    <property type="project" value="Reactome"/>
</dbReference>
<dbReference type="GO" id="GO:0005576">
    <property type="term" value="C:extracellular region"/>
    <property type="evidence" value="ECO:0000304"/>
    <property type="project" value="Reactome"/>
</dbReference>
<dbReference type="GO" id="GO:0005615">
    <property type="term" value="C:extracellular space"/>
    <property type="evidence" value="ECO:0000314"/>
    <property type="project" value="MGI"/>
</dbReference>
<dbReference type="GO" id="GO:0005796">
    <property type="term" value="C:Golgi lumen"/>
    <property type="evidence" value="ECO:0000304"/>
    <property type="project" value="Reactome"/>
</dbReference>
<dbReference type="GO" id="GO:0043514">
    <property type="term" value="C:interleukin-12 complex"/>
    <property type="evidence" value="ECO:0000314"/>
    <property type="project" value="MGI"/>
</dbReference>
<dbReference type="GO" id="GO:0070743">
    <property type="term" value="C:interleukin-23 complex"/>
    <property type="evidence" value="ECO:0000314"/>
    <property type="project" value="BHF-UCL"/>
</dbReference>
<dbReference type="GO" id="GO:0016020">
    <property type="term" value="C:membrane"/>
    <property type="evidence" value="ECO:0007669"/>
    <property type="project" value="InterPro"/>
</dbReference>
<dbReference type="GO" id="GO:0005125">
    <property type="term" value="F:cytokine activity"/>
    <property type="evidence" value="ECO:0007669"/>
    <property type="project" value="UniProtKB-KW"/>
</dbReference>
<dbReference type="GO" id="GO:0004896">
    <property type="term" value="F:cytokine receptor activity"/>
    <property type="evidence" value="ECO:0007669"/>
    <property type="project" value="InterPro"/>
</dbReference>
<dbReference type="GO" id="GO:0008083">
    <property type="term" value="F:growth factor activity"/>
    <property type="evidence" value="ECO:0007669"/>
    <property type="project" value="Ensembl"/>
</dbReference>
<dbReference type="GO" id="GO:0042802">
    <property type="term" value="F:identical protein binding"/>
    <property type="evidence" value="ECO:0000353"/>
    <property type="project" value="MGI"/>
</dbReference>
<dbReference type="GO" id="GO:0042164">
    <property type="term" value="F:interleukin-12 alpha subunit binding"/>
    <property type="evidence" value="ECO:0000353"/>
    <property type="project" value="MGI"/>
</dbReference>
<dbReference type="GO" id="GO:0045519">
    <property type="term" value="F:interleukin-23 receptor binding"/>
    <property type="evidence" value="ECO:0007669"/>
    <property type="project" value="Ensembl"/>
</dbReference>
<dbReference type="GO" id="GO:0046982">
    <property type="term" value="F:protein heterodimerization activity"/>
    <property type="evidence" value="ECO:0007669"/>
    <property type="project" value="Ensembl"/>
</dbReference>
<dbReference type="GO" id="GO:0016477">
    <property type="term" value="P:cell migration"/>
    <property type="evidence" value="ECO:0007669"/>
    <property type="project" value="Ensembl"/>
</dbReference>
<dbReference type="GO" id="GO:0008283">
    <property type="term" value="P:cell population proliferation"/>
    <property type="evidence" value="ECO:0000314"/>
    <property type="project" value="MGI"/>
</dbReference>
<dbReference type="GO" id="GO:0007166">
    <property type="term" value="P:cell surface receptor signaling pathway"/>
    <property type="evidence" value="ECO:0000314"/>
    <property type="project" value="MGI"/>
</dbReference>
<dbReference type="GO" id="GO:0007259">
    <property type="term" value="P:cell surface receptor signaling pathway via JAK-STAT"/>
    <property type="evidence" value="ECO:0007669"/>
    <property type="project" value="Ensembl"/>
</dbReference>
<dbReference type="GO" id="GO:0071222">
    <property type="term" value="P:cellular response to lipopolysaccharide"/>
    <property type="evidence" value="ECO:0000314"/>
    <property type="project" value="MGI"/>
</dbReference>
<dbReference type="GO" id="GO:0071346">
    <property type="term" value="P:cellular response to type II interferon"/>
    <property type="evidence" value="ECO:0000314"/>
    <property type="project" value="MGI"/>
</dbReference>
<dbReference type="GO" id="GO:0050829">
    <property type="term" value="P:defense response to Gram-negative bacterium"/>
    <property type="evidence" value="ECO:0007669"/>
    <property type="project" value="Ensembl"/>
</dbReference>
<dbReference type="GO" id="GO:0042832">
    <property type="term" value="P:defense response to protozoan"/>
    <property type="evidence" value="ECO:0000314"/>
    <property type="project" value="MGI"/>
</dbReference>
<dbReference type="GO" id="GO:0051607">
    <property type="term" value="P:defense response to virus"/>
    <property type="evidence" value="ECO:0000314"/>
    <property type="project" value="MGI"/>
</dbReference>
<dbReference type="GO" id="GO:0035722">
    <property type="term" value="P:interleukin-12-mediated signaling pathway"/>
    <property type="evidence" value="ECO:0007669"/>
    <property type="project" value="Ensembl"/>
</dbReference>
<dbReference type="GO" id="GO:0030101">
    <property type="term" value="P:natural killer cell activation"/>
    <property type="evidence" value="ECO:0000250"/>
    <property type="project" value="UniProtKB"/>
</dbReference>
<dbReference type="GO" id="GO:1903588">
    <property type="term" value="P:negative regulation of blood vessel endothelial cell proliferation involved in sprouting angiogenesis"/>
    <property type="evidence" value="ECO:0007669"/>
    <property type="project" value="Ensembl"/>
</dbReference>
<dbReference type="GO" id="GO:0002862">
    <property type="term" value="P:negative regulation of inflammatory response to antigenic stimulus"/>
    <property type="evidence" value="ECO:0000315"/>
    <property type="project" value="MGI"/>
</dbReference>
<dbReference type="GO" id="GO:0032693">
    <property type="term" value="P:negative regulation of interleukin-10 production"/>
    <property type="evidence" value="ECO:0007669"/>
    <property type="project" value="Ensembl"/>
</dbReference>
<dbReference type="GO" id="GO:0032700">
    <property type="term" value="P:negative regulation of interleukin-17 production"/>
    <property type="evidence" value="ECO:0007669"/>
    <property type="project" value="Ensembl"/>
</dbReference>
<dbReference type="GO" id="GO:0050709">
    <property type="term" value="P:negative regulation of protein secretion"/>
    <property type="evidence" value="ECO:0007669"/>
    <property type="project" value="Ensembl"/>
</dbReference>
<dbReference type="GO" id="GO:0048662">
    <property type="term" value="P:negative regulation of smooth muscle cell proliferation"/>
    <property type="evidence" value="ECO:0007669"/>
    <property type="project" value="Ensembl"/>
</dbReference>
<dbReference type="GO" id="GO:1900747">
    <property type="term" value="P:negative regulation of vascular endothelial growth factor signaling pathway"/>
    <property type="evidence" value="ECO:0007669"/>
    <property type="project" value="Ensembl"/>
</dbReference>
<dbReference type="GO" id="GO:0042104">
    <property type="term" value="P:positive regulation of activated T cell proliferation"/>
    <property type="evidence" value="ECO:0000250"/>
    <property type="project" value="UniProtKB"/>
</dbReference>
<dbReference type="GO" id="GO:0002230">
    <property type="term" value="P:positive regulation of defense response to virus by host"/>
    <property type="evidence" value="ECO:0000314"/>
    <property type="project" value="BHF-UCL"/>
</dbReference>
<dbReference type="GO" id="GO:0032725">
    <property type="term" value="P:positive regulation of granulocyte macrophage colony-stimulating factor production"/>
    <property type="evidence" value="ECO:0007669"/>
    <property type="project" value="Ensembl"/>
</dbReference>
<dbReference type="GO" id="GO:0032733">
    <property type="term" value="P:positive regulation of interleukin-10 production"/>
    <property type="evidence" value="ECO:0007669"/>
    <property type="project" value="Ensembl"/>
</dbReference>
<dbReference type="GO" id="GO:0032735">
    <property type="term" value="P:positive regulation of interleukin-12 production"/>
    <property type="evidence" value="ECO:0007669"/>
    <property type="project" value="Ensembl"/>
</dbReference>
<dbReference type="GO" id="GO:0032740">
    <property type="term" value="P:positive regulation of interleukin-17 production"/>
    <property type="evidence" value="ECO:0007669"/>
    <property type="project" value="Ensembl"/>
</dbReference>
<dbReference type="GO" id="GO:0002860">
    <property type="term" value="P:positive regulation of natural killer cell mediated cytotoxicity directed against tumor cell target"/>
    <property type="evidence" value="ECO:0007669"/>
    <property type="project" value="Ensembl"/>
</dbReference>
<dbReference type="GO" id="GO:0032819">
    <property type="term" value="P:positive regulation of natural killer cell proliferation"/>
    <property type="evidence" value="ECO:0007669"/>
    <property type="project" value="Ensembl"/>
</dbReference>
<dbReference type="GO" id="GO:0051142">
    <property type="term" value="P:positive regulation of NK T cell proliferation"/>
    <property type="evidence" value="ECO:0007669"/>
    <property type="project" value="Ensembl"/>
</dbReference>
<dbReference type="GO" id="GO:0045672">
    <property type="term" value="P:positive regulation of osteoclast differentiation"/>
    <property type="evidence" value="ECO:0007669"/>
    <property type="project" value="Ensembl"/>
</dbReference>
<dbReference type="GO" id="GO:0034393">
    <property type="term" value="P:positive regulation of smooth muscle cell apoptotic process"/>
    <property type="evidence" value="ECO:0007669"/>
    <property type="project" value="Ensembl"/>
</dbReference>
<dbReference type="GO" id="GO:0001916">
    <property type="term" value="P:positive regulation of T cell mediated cytotoxicity"/>
    <property type="evidence" value="ECO:0000314"/>
    <property type="project" value="BHF-UCL"/>
</dbReference>
<dbReference type="GO" id="GO:0042102">
    <property type="term" value="P:positive regulation of T cell proliferation"/>
    <property type="evidence" value="ECO:0000314"/>
    <property type="project" value="MGI"/>
</dbReference>
<dbReference type="GO" id="GO:0002827">
    <property type="term" value="P:positive regulation of T-helper 1 type immune response"/>
    <property type="evidence" value="ECO:0000314"/>
    <property type="project" value="BHF-UCL"/>
</dbReference>
<dbReference type="GO" id="GO:0032760">
    <property type="term" value="P:positive regulation of tumor necrosis factor production"/>
    <property type="evidence" value="ECO:0007669"/>
    <property type="project" value="Ensembl"/>
</dbReference>
<dbReference type="GO" id="GO:0032729">
    <property type="term" value="P:positive regulation of type II interferon production"/>
    <property type="evidence" value="ECO:0000314"/>
    <property type="project" value="MGI"/>
</dbReference>
<dbReference type="GO" id="GO:0010224">
    <property type="term" value="P:response to UV-B"/>
    <property type="evidence" value="ECO:0007669"/>
    <property type="project" value="Ensembl"/>
</dbReference>
<dbReference type="GO" id="GO:0042098">
    <property type="term" value="P:T cell proliferation"/>
    <property type="evidence" value="ECO:0000314"/>
    <property type="project" value="MGI"/>
</dbReference>
<dbReference type="GO" id="GO:0042093">
    <property type="term" value="P:T-helper cell differentiation"/>
    <property type="evidence" value="ECO:0000250"/>
    <property type="project" value="UniProtKB"/>
</dbReference>
<dbReference type="CDD" id="cd00063">
    <property type="entry name" value="FN3"/>
    <property type="match status" value="1"/>
</dbReference>
<dbReference type="FunFam" id="2.60.40.10:FF:000959">
    <property type="entry name" value="Interleukin-12 subunit beta"/>
    <property type="match status" value="1"/>
</dbReference>
<dbReference type="FunFam" id="2.60.40.10:FF:001008">
    <property type="entry name" value="Interleukin-12 subunit beta"/>
    <property type="match status" value="1"/>
</dbReference>
<dbReference type="Gene3D" id="2.60.40.10">
    <property type="entry name" value="Immunoglobulins"/>
    <property type="match status" value="3"/>
</dbReference>
<dbReference type="InterPro" id="IPR003961">
    <property type="entry name" value="FN3_dom"/>
</dbReference>
<dbReference type="InterPro" id="IPR036116">
    <property type="entry name" value="FN3_sf"/>
</dbReference>
<dbReference type="InterPro" id="IPR003530">
    <property type="entry name" value="Hematopoietin_rcpt_L_F3_CS"/>
</dbReference>
<dbReference type="InterPro" id="IPR007110">
    <property type="entry name" value="Ig-like_dom"/>
</dbReference>
<dbReference type="InterPro" id="IPR036179">
    <property type="entry name" value="Ig-like_dom_sf"/>
</dbReference>
<dbReference type="InterPro" id="IPR013783">
    <property type="entry name" value="Ig-like_fold"/>
</dbReference>
<dbReference type="InterPro" id="IPR003598">
    <property type="entry name" value="Ig_sub2"/>
</dbReference>
<dbReference type="InterPro" id="IPR050676">
    <property type="entry name" value="IL-12"/>
</dbReference>
<dbReference type="InterPro" id="IPR015528">
    <property type="entry name" value="IL-12_beta"/>
</dbReference>
<dbReference type="InterPro" id="IPR019482">
    <property type="entry name" value="IL-12_beta_cen-dom"/>
</dbReference>
<dbReference type="PANTHER" id="PTHR48485:SF4">
    <property type="entry name" value="INTERLEUKIN-12 SUBUNIT BETA"/>
    <property type="match status" value="1"/>
</dbReference>
<dbReference type="PANTHER" id="PTHR48485">
    <property type="entry name" value="INTERLEUKIN-12 SUBUNIT BETA-RELATED"/>
    <property type="match status" value="1"/>
</dbReference>
<dbReference type="Pfam" id="PF10420">
    <property type="entry name" value="IL12p40_C"/>
    <property type="match status" value="1"/>
</dbReference>
<dbReference type="PIRSF" id="PIRSF038007">
    <property type="entry name" value="IL_12_beta"/>
    <property type="match status" value="1"/>
</dbReference>
<dbReference type="PRINTS" id="PR01928">
    <property type="entry name" value="INTRLEUKN12B"/>
</dbReference>
<dbReference type="SMART" id="SM00408">
    <property type="entry name" value="IGc2"/>
    <property type="match status" value="1"/>
</dbReference>
<dbReference type="SUPFAM" id="SSF49265">
    <property type="entry name" value="Fibronectin type III"/>
    <property type="match status" value="2"/>
</dbReference>
<dbReference type="SUPFAM" id="SSF48726">
    <property type="entry name" value="Immunoglobulin"/>
    <property type="match status" value="1"/>
</dbReference>
<dbReference type="PROSITE" id="PS01354">
    <property type="entry name" value="HEMATOPO_REC_L_F3"/>
    <property type="match status" value="1"/>
</dbReference>
<dbReference type="PROSITE" id="PS50835">
    <property type="entry name" value="IG_LIKE"/>
    <property type="match status" value="1"/>
</dbReference>
<sequence>MCPQKLTISWFAIVLLVSPLMAMWELEKDVYVVEVDWTPDAPGETVNLTCDTPEEDDITWTSDQRHGVIGSGKTLTITVKEFLDAGQYTCHKGGETLSHSHLLLHKKENGIWSTEILKNFKNKTFLKCEAPNYSGRFTCSWLVQRNMDLKFNIKSSSSSPDSRAVTCGMASLSAEKVTLDQRDYEKYSVSCQEDVTCPTAEETLPIELALEARQQNKYENYSTSFFIRDIIKPDPPKNLQMKPLKNSQVEVSWEYPDSWSTPHSYFSLKFFVRIQRKKEKMKETEEGCNQKGAFLVEKTSTEVQCKGGNVCVQAQDRYYNSSCSKWACVPCRVRS</sequence>
<organism>
    <name type="scientific">Mus musculus</name>
    <name type="common">Mouse</name>
    <dbReference type="NCBI Taxonomy" id="10090"/>
    <lineage>
        <taxon>Eukaryota</taxon>
        <taxon>Metazoa</taxon>
        <taxon>Chordata</taxon>
        <taxon>Craniata</taxon>
        <taxon>Vertebrata</taxon>
        <taxon>Euteleostomi</taxon>
        <taxon>Mammalia</taxon>
        <taxon>Eutheria</taxon>
        <taxon>Euarchontoglires</taxon>
        <taxon>Glires</taxon>
        <taxon>Rodentia</taxon>
        <taxon>Myomorpha</taxon>
        <taxon>Muroidea</taxon>
        <taxon>Muridae</taxon>
        <taxon>Murinae</taxon>
        <taxon>Mus</taxon>
        <taxon>Mus</taxon>
    </lineage>
</organism>
<name>IL12B_MOUSE</name>
<protein>
    <recommendedName>
        <fullName>Interleukin-12 subunit beta</fullName>
        <shortName>IL-12B</shortName>
    </recommendedName>
    <alternativeName>
        <fullName>Cytotoxic lymphocyte maturation factor 40 kDa subunit</fullName>
        <shortName>CLMF p40</shortName>
    </alternativeName>
    <alternativeName>
        <fullName>IL-12 subunit p40</fullName>
    </alternativeName>
</protein>
<gene>
    <name type="primary">Il12b</name>
</gene>
<evidence type="ECO:0000250" key="1"/>
<evidence type="ECO:0000250" key="2">
    <source>
        <dbReference type="UniProtKB" id="P29460"/>
    </source>
</evidence>
<evidence type="ECO:0000255" key="3"/>
<evidence type="ECO:0000255" key="4">
    <source>
        <dbReference type="PROSITE-ProRule" id="PRU00114"/>
    </source>
</evidence>
<evidence type="ECO:0000269" key="5">
    <source>
    </source>
</evidence>
<evidence type="ECO:0000269" key="6">
    <source>
    </source>
</evidence>
<evidence type="ECO:0000269" key="7">
    <source>
    </source>
</evidence>
<evidence type="ECO:0000305" key="8"/>
<evidence type="ECO:0007829" key="9">
    <source>
        <dbReference type="PDB" id="6SFF"/>
    </source>
</evidence>
<evidence type="ECO:0007829" key="10">
    <source>
        <dbReference type="PDB" id="8CR5"/>
    </source>
</evidence>
<evidence type="ECO:0007829" key="11">
    <source>
        <dbReference type="PDB" id="8CR6"/>
    </source>
</evidence>
<keyword id="KW-0002">3D-structure</keyword>
<keyword id="KW-0202">Cytokine</keyword>
<keyword id="KW-1015">Disulfide bond</keyword>
<keyword id="KW-0325">Glycoprotein</keyword>
<keyword id="KW-0393">Immunoglobulin domain</keyword>
<keyword id="KW-1185">Reference proteome</keyword>
<keyword id="KW-0964">Secreted</keyword>
<keyword id="KW-0732">Signal</keyword>
<feature type="signal peptide" evidence="1">
    <location>
        <begin position="1"/>
        <end position="22"/>
    </location>
</feature>
<feature type="chain" id="PRO_0000010933" description="Interleukin-12 subunit beta">
    <location>
        <begin position="23"/>
        <end position="335"/>
    </location>
</feature>
<feature type="domain" description="Ig-like C2-type">
    <location>
        <begin position="23"/>
        <end position="106"/>
    </location>
</feature>
<feature type="domain" description="Fibronectin type-III">
    <location>
        <begin position="233"/>
        <end position="324"/>
    </location>
</feature>
<feature type="glycosylation site" description="N-linked (GlcNAc...) asparagine" evidence="3">
    <location>
        <position position="47"/>
    </location>
</feature>
<feature type="glycosylation site" description="N-linked (GlcNAc...) asparagine" evidence="3">
    <location>
        <position position="122"/>
    </location>
</feature>
<feature type="glycosylation site" description="N-linked (GlcNAc...) asparagine" evidence="3">
    <location>
        <position position="132"/>
    </location>
</feature>
<feature type="glycosylation site" description="N-linked (GlcNAc...) asparagine" evidence="3">
    <location>
        <position position="220"/>
    </location>
</feature>
<feature type="disulfide bond" evidence="4">
    <location>
        <begin position="50"/>
        <end position="90"/>
    </location>
</feature>
<feature type="disulfide bond" description="Interchain (with C-92 in IL12A and C-74 in IL23A)" evidence="2">
    <location>
        <position position="197"/>
    </location>
</feature>
<feature type="sequence variant" description="In strain: B10.S/J and SJL/J." evidence="5">
    <original>M</original>
    <variation>T</variation>
    <location>
        <position position="169"/>
    </location>
</feature>
<feature type="sequence variant" description="In strain: B10.S/J and SJL/J." evidence="5">
    <original>F</original>
    <variation>L</variation>
    <location>
        <position position="294"/>
    </location>
</feature>
<feature type="strand" evidence="10">
    <location>
        <begin position="24"/>
        <end position="27"/>
    </location>
</feature>
<feature type="strand" evidence="10">
    <location>
        <begin position="30"/>
        <end position="37"/>
    </location>
</feature>
<feature type="strand" evidence="10">
    <location>
        <begin position="39"/>
        <end position="41"/>
    </location>
</feature>
<feature type="strand" evidence="10">
    <location>
        <begin position="44"/>
        <end position="49"/>
    </location>
</feature>
<feature type="strand" evidence="9">
    <location>
        <begin position="51"/>
        <end position="53"/>
    </location>
</feature>
<feature type="strand" evidence="10">
    <location>
        <begin position="59"/>
        <end position="62"/>
    </location>
</feature>
<feature type="strand" evidence="10">
    <location>
        <begin position="65"/>
        <end position="67"/>
    </location>
</feature>
<feature type="strand" evidence="10">
    <location>
        <begin position="70"/>
        <end position="79"/>
    </location>
</feature>
<feature type="helix" evidence="10">
    <location>
        <begin position="82"/>
        <end position="84"/>
    </location>
</feature>
<feature type="strand" evidence="10">
    <location>
        <begin position="86"/>
        <end position="92"/>
    </location>
</feature>
<feature type="strand" evidence="10">
    <location>
        <begin position="95"/>
        <end position="108"/>
    </location>
</feature>
<feature type="strand" evidence="10">
    <location>
        <begin position="116"/>
        <end position="118"/>
    </location>
</feature>
<feature type="strand" evidence="10">
    <location>
        <begin position="127"/>
        <end position="144"/>
    </location>
</feature>
<feature type="strand" evidence="10">
    <location>
        <begin position="147"/>
        <end position="155"/>
    </location>
</feature>
<feature type="strand" evidence="11">
    <location>
        <begin position="159"/>
        <end position="162"/>
    </location>
</feature>
<feature type="strand" evidence="10">
    <location>
        <begin position="165"/>
        <end position="167"/>
    </location>
</feature>
<feature type="helix" evidence="10">
    <location>
        <begin position="169"/>
        <end position="171"/>
    </location>
</feature>
<feature type="strand" evidence="10">
    <location>
        <begin position="173"/>
        <end position="179"/>
    </location>
</feature>
<feature type="strand" evidence="10">
    <location>
        <begin position="182"/>
        <end position="195"/>
    </location>
</feature>
<feature type="strand" evidence="9">
    <location>
        <begin position="198"/>
        <end position="200"/>
    </location>
</feature>
<feature type="strand" evidence="10">
    <location>
        <begin position="206"/>
        <end position="214"/>
    </location>
</feature>
<feature type="strand" evidence="10">
    <location>
        <begin position="217"/>
        <end position="225"/>
    </location>
</feature>
<feature type="helix" evidence="10">
    <location>
        <begin position="227"/>
        <end position="230"/>
    </location>
</feature>
<feature type="strand" evidence="9">
    <location>
        <begin position="237"/>
        <end position="244"/>
    </location>
</feature>
<feature type="strand" evidence="9">
    <location>
        <begin position="248"/>
        <end position="254"/>
    </location>
</feature>
<feature type="turn" evidence="10">
    <location>
        <begin position="263"/>
        <end position="265"/>
    </location>
</feature>
<feature type="strand" evidence="10">
    <location>
        <begin position="268"/>
        <end position="275"/>
    </location>
</feature>
<feature type="strand" evidence="10">
    <location>
        <begin position="294"/>
        <end position="296"/>
    </location>
</feature>
<feature type="strand" evidence="9">
    <location>
        <begin position="298"/>
        <end position="303"/>
    </location>
</feature>
<feature type="strand" evidence="10">
    <location>
        <begin position="306"/>
        <end position="316"/>
    </location>
</feature>
<feature type="strand" evidence="10">
    <location>
        <begin position="327"/>
        <end position="330"/>
    </location>
</feature>
<reference key="1">
    <citation type="journal article" date="1992" name="J. Immunol.">
        <title>Cloning and expression of murine IL-12.</title>
        <authorList>
            <person name="Schoenhaut D.S."/>
            <person name="Chua A.O."/>
            <person name="Wolitzky A.G."/>
            <person name="Quinn P.M."/>
            <person name="Dwyer C.M."/>
            <person name="Gately M.K."/>
            <person name="Gubler U."/>
        </authorList>
    </citation>
    <scope>NUCLEOTIDE SEQUENCE [MRNA]</scope>
    <source>
        <strain>C57BL/6J</strain>
        <tissue>Spleen</tissue>
    </source>
</reference>
<reference key="2">
    <citation type="journal article" date="1996" name="Eur. J. Immunol.">
        <title>Structure and chromosomal location of the mouse interleukin-12 p35 and p40 subunit genes.</title>
        <authorList>
            <person name="Tone Y."/>
            <person name="Thompson S.A."/>
            <person name="Babik J.M."/>
            <person name="Nolan K.F."/>
            <person name="Tone M."/>
            <person name="Raven C."/>
            <person name="Waldmann H."/>
        </authorList>
    </citation>
    <scope>NUCLEOTIDE SEQUENCE [GENOMIC DNA]</scope>
</reference>
<reference key="3">
    <citation type="journal article" date="1999" name="J. Immunol.">
        <title>Sequence polymorphisms in the chemokines Scya1 (TCA-3), Scya2 (monocyte chemoattractant protein (MCP)-1), and Scya12 (MCP-5) are candidates for eae7, a locus controlling susceptibility to monophasic remitting/nonrelapsing experimental allergic encephalomyelitis.</title>
        <authorList>
            <person name="Teuscher C."/>
            <person name="Butterfield R.J."/>
            <person name="Ma R.Z."/>
            <person name="Zachary J.F."/>
            <person name="Doerge R.W."/>
            <person name="Blankenhorn E.P."/>
        </authorList>
    </citation>
    <scope>NUCLEOTIDE SEQUENCE [MRNA]</scope>
    <scope>VARIANTS THR-169 AND LEU-294</scope>
    <source>
        <strain>B10.S/J</strain>
        <strain>SJL/J</strain>
        <tissue>Spleen</tissue>
    </source>
</reference>
<reference key="4">
    <citation type="journal article" date="2000" name="Immunity">
        <title>Novel p19 protein engages IL-12p40 to form a cytokine, IL-23, with biological activities similar as well as distinct from IL-12.</title>
        <authorList>
            <person name="Oppmann B."/>
            <person name="Lesley R."/>
            <person name="Blom B."/>
            <person name="Timans J.C."/>
            <person name="Xu Y."/>
            <person name="Hunte B."/>
            <person name="Vega F."/>
            <person name="Yu N."/>
            <person name="Wang J."/>
            <person name="Singh K.P."/>
            <person name="Zonin F."/>
            <person name="Vaisberg E."/>
            <person name="Churakova T."/>
            <person name="Liu M.-R."/>
            <person name="Gorman D."/>
            <person name="Wagner J."/>
            <person name="Zurawski S."/>
            <person name="Liu Y.-J."/>
            <person name="Abrams J.S."/>
            <person name="Moore K.W."/>
            <person name="Rennick D.M."/>
            <person name="de Waal-Malefyt R."/>
            <person name="Hannum C."/>
            <person name="Bazan J.F."/>
            <person name="Kastelein R.A."/>
        </authorList>
    </citation>
    <scope>FUNCTION</scope>
    <scope>INTERACTION WITH IL23A</scope>
</reference>
<reference key="5">
    <citation type="journal article" date="2022" name="J. Crohns. Colitis.">
        <title>Non-autophagy Role of Atg5 and NBR1 in Unconventional Secretion of IL-12 Prevents Gut Dysbiosis and Inflammation.</title>
        <authorList>
            <person name="Merkley S.D."/>
            <person name="Goodfellow S.M."/>
            <person name="Guo Y."/>
            <person name="Wilton Z.E.R."/>
            <person name="Byrum J.R."/>
            <person name="Schwalm K.C."/>
            <person name="Dinwiddie D.L."/>
            <person name="Gullapalli R.R."/>
            <person name="Deretic V."/>
            <person name="Jimenez Hernandez A."/>
            <person name="Bradfute S.B."/>
            <person name="In J.G."/>
            <person name="Castillo E.F."/>
        </authorList>
    </citation>
    <scope>INTERACTION WITH NBR1</scope>
    <scope>SUBCELLULAR LOCATION</scope>
</reference>
<comment type="function">
    <text evidence="1">Cytokine that can act as a growth factor for activated T and NK cells, enhance the lytic activity of NK/lymphokine-activated killer cells, and stimulate the production of IFN-gamma by resting PBMC.</text>
</comment>
<comment type="function">
    <text evidence="6">Associates with IL23A to form the IL-23 interleukin, a heterodimeric cytokine which functions in innate and adaptive immunity. IL-23 may constitute with IL-17 an acute response to infection in peripheral tissues. IL-23 binds to a heterodimeric receptor complex composed of IL12RB1 and IL23R, activates the Jak-Stat signaling cascade, stimulates memory rather than naive T-cells and promotes production of pro-inflammatory cytokines. IL-23 induces autoimmune inflammation and thus may be responsible for autoimmune inflammatory diseases and may be important for tumorigenesis.</text>
</comment>
<comment type="subunit">
    <text evidence="2">Heterodimer with IL12A; disulfide-linked. The heterodimer is known as interleukin IL-12. Heterodimer with IL23A; disulfide-linked. The heterodimer is known as interleukin IL-23. Also secreted as a monomer. Interacts with NBR1; this interaction promotes IL-12 secretion (PubMed:34374750).</text>
</comment>
<comment type="interaction">
    <interactant intactId="EBI-2481353">
        <id>P43432</id>
    </interactant>
    <interactant intactId="EBI-2481329">
        <id>Q9EQ14</id>
        <label>Il23a</label>
    </interactant>
    <organismsDiffer>false</organismsDiffer>
    <experiments>3</experiments>
</comment>
<comment type="subcellular location">
    <subcellularLocation>
        <location evidence="7">Secreted</location>
    </subcellularLocation>
</comment>
<comment type="similarity">
    <text evidence="8">Belongs to the IL-12B family.</text>
</comment>
<accession>P43432</accession>
<accession>Q9QUM1</accession>